<organism>
    <name type="scientific">Ginkgo biloba</name>
    <name type="common">Ginkgo</name>
    <name type="synonym">Maidenhair tree</name>
    <dbReference type="NCBI Taxonomy" id="3311"/>
    <lineage>
        <taxon>Eukaryota</taxon>
        <taxon>Viridiplantae</taxon>
        <taxon>Streptophyta</taxon>
        <taxon>Embryophyta</taxon>
        <taxon>Tracheophyta</taxon>
        <taxon>Spermatophyta</taxon>
        <taxon>Ginkgoidae</taxon>
        <taxon>Ginkgoales</taxon>
        <taxon>Ginkgoaceae</taxon>
        <taxon>Ginkgo</taxon>
    </lineage>
</organism>
<evidence type="ECO:0000255" key="1">
    <source>
        <dbReference type="HAMAP-Rule" id="MF_00642"/>
    </source>
</evidence>
<evidence type="ECO:0000269" key="2">
    <source>
    </source>
</evidence>
<reference key="1">
    <citation type="journal article" date="1999" name="Gene">
        <title>RNA editing in an untranslated region of the Ginkgo chloroplast genome.</title>
        <authorList>
            <person name="Kudla J."/>
            <person name="Bock R."/>
        </authorList>
    </citation>
    <scope>NUCLEOTIDE SEQUENCE [GENOMIC DNA]</scope>
    <scope>RNA EDITING OF POSITION 72</scope>
</reference>
<gene>
    <name evidence="1" type="primary">psbE</name>
</gene>
<keyword id="KW-0150">Chloroplast</keyword>
<keyword id="KW-0249">Electron transport</keyword>
<keyword id="KW-0349">Heme</keyword>
<keyword id="KW-0408">Iron</keyword>
<keyword id="KW-0472">Membrane</keyword>
<keyword id="KW-0479">Metal-binding</keyword>
<keyword id="KW-0602">Photosynthesis</keyword>
<keyword id="KW-0604">Photosystem II</keyword>
<keyword id="KW-0934">Plastid</keyword>
<keyword id="KW-0691">RNA editing</keyword>
<keyword id="KW-0793">Thylakoid</keyword>
<keyword id="KW-0812">Transmembrane</keyword>
<keyword id="KW-1133">Transmembrane helix</keyword>
<keyword id="KW-0813">Transport</keyword>
<comment type="function">
    <text evidence="1">This b-type cytochrome is tightly associated with the reaction center of photosystem II (PSII). PSII is a light-driven water:plastoquinone oxidoreductase that uses light energy to abstract electrons from H(2)O, generating O(2) and a proton gradient subsequently used for ATP formation. It consists of a core antenna complex that captures photons, and an electron transfer chain that converts photonic excitation into a charge separation.</text>
</comment>
<comment type="cofactor">
    <cofactor evidence="1">
        <name>heme b</name>
        <dbReference type="ChEBI" id="CHEBI:60344"/>
    </cofactor>
    <text evidence="1">With its partner (PsbF) binds heme. PSII binds additional chlorophylls, carotenoids and specific lipids.</text>
</comment>
<comment type="subunit">
    <text evidence="1">Heterodimer of an alpha subunit and a beta subunit. PSII is composed of 1 copy each of membrane proteins PsbA, PsbB, PsbC, PsbD, PsbE, PsbF, PsbH, PsbI, PsbJ, PsbK, PsbL, PsbM, PsbT, PsbX, PsbY, PsbZ, Psb30/Ycf12, at least 3 peripheral proteins of the oxygen-evolving complex and a large number of cofactors. It forms dimeric complexes.</text>
</comment>
<comment type="subcellular location">
    <subcellularLocation>
        <location evidence="1">Plastid</location>
        <location evidence="1">Chloroplast thylakoid membrane</location>
        <topology evidence="1">Single-pass membrane protein</topology>
    </subcellularLocation>
</comment>
<comment type="RNA editing">
    <location>
        <position position="72" evidence="2"/>
    </location>
</comment>
<comment type="similarity">
    <text evidence="1">Belongs to the PsbE/PsbF family.</text>
</comment>
<accession>Q9THZ3</accession>
<proteinExistence type="evidence at transcript level"/>
<protein>
    <recommendedName>
        <fullName evidence="1">Cytochrome b559 subunit alpha</fullName>
    </recommendedName>
    <alternativeName>
        <fullName evidence="1">PSII reaction center subunit V</fullName>
    </alternativeName>
</protein>
<geneLocation type="chloroplast"/>
<sequence length="83" mass="9472">MSGNTGERSFADIITSIRYWVIHSITIPSLFIAGWLFVSTGLAYDVFGSPRPNEYFTDSRQEVPLITGRFDSLEQLDEFTRSF</sequence>
<name>PSBE_GINBI</name>
<feature type="chain" id="PRO_0000200310" description="Cytochrome b559 subunit alpha">
    <location>
        <begin position="1"/>
        <end position="83"/>
    </location>
</feature>
<feature type="transmembrane region" description="Helical" evidence="1">
    <location>
        <begin position="21"/>
        <end position="35"/>
    </location>
</feature>
<feature type="binding site" description="axial binding residue" evidence="1">
    <location>
        <position position="23"/>
    </location>
    <ligand>
        <name>heme</name>
        <dbReference type="ChEBI" id="CHEBI:30413"/>
        <note>ligand shared with beta subunit</note>
    </ligand>
    <ligandPart>
        <name>Fe</name>
        <dbReference type="ChEBI" id="CHEBI:18248"/>
    </ligandPart>
</feature>
<dbReference type="EMBL" id="AJ130891">
    <property type="protein sequence ID" value="CAB61491.1"/>
    <property type="molecule type" value="Genomic_DNA"/>
</dbReference>
<dbReference type="RefSeq" id="YP_005352724.1">
    <property type="nucleotide sequence ID" value="NC_016986.1"/>
</dbReference>
<dbReference type="SMR" id="Q9THZ3"/>
<dbReference type="GeneID" id="11935022"/>
<dbReference type="GO" id="GO:0009535">
    <property type="term" value="C:chloroplast thylakoid membrane"/>
    <property type="evidence" value="ECO:0007669"/>
    <property type="project" value="UniProtKB-SubCell"/>
</dbReference>
<dbReference type="GO" id="GO:0009539">
    <property type="term" value="C:photosystem II reaction center"/>
    <property type="evidence" value="ECO:0007669"/>
    <property type="project" value="InterPro"/>
</dbReference>
<dbReference type="GO" id="GO:0009055">
    <property type="term" value="F:electron transfer activity"/>
    <property type="evidence" value="ECO:0007669"/>
    <property type="project" value="UniProtKB-UniRule"/>
</dbReference>
<dbReference type="GO" id="GO:0020037">
    <property type="term" value="F:heme binding"/>
    <property type="evidence" value="ECO:0007669"/>
    <property type="project" value="InterPro"/>
</dbReference>
<dbReference type="GO" id="GO:0005506">
    <property type="term" value="F:iron ion binding"/>
    <property type="evidence" value="ECO:0007669"/>
    <property type="project" value="UniProtKB-UniRule"/>
</dbReference>
<dbReference type="GO" id="GO:0009767">
    <property type="term" value="P:photosynthetic electron transport chain"/>
    <property type="evidence" value="ECO:0007669"/>
    <property type="project" value="InterPro"/>
</dbReference>
<dbReference type="Gene3D" id="1.20.5.860">
    <property type="entry name" value="Photosystem II cytochrome b559, alpha subunit"/>
    <property type="match status" value="1"/>
</dbReference>
<dbReference type="HAMAP" id="MF_00642">
    <property type="entry name" value="PSII_PsbE"/>
    <property type="match status" value="1"/>
</dbReference>
<dbReference type="InterPro" id="IPR006217">
    <property type="entry name" value="PSII_cyt_b559_asu"/>
</dbReference>
<dbReference type="InterPro" id="IPR037025">
    <property type="entry name" value="PSII_cyt_b559_asu_sf"/>
</dbReference>
<dbReference type="InterPro" id="IPR006216">
    <property type="entry name" value="PSII_cyt_b559_CS"/>
</dbReference>
<dbReference type="InterPro" id="IPR013081">
    <property type="entry name" value="PSII_cyt_b559_N"/>
</dbReference>
<dbReference type="InterPro" id="IPR013082">
    <property type="entry name" value="PSII_cytb559_asu_lum"/>
</dbReference>
<dbReference type="NCBIfam" id="TIGR01332">
    <property type="entry name" value="cyt_b559_alpha"/>
    <property type="match status" value="1"/>
</dbReference>
<dbReference type="PANTHER" id="PTHR33391">
    <property type="entry name" value="CYTOCHROME B559 SUBUNIT BETA-RELATED"/>
    <property type="match status" value="1"/>
</dbReference>
<dbReference type="PANTHER" id="PTHR33391:SF9">
    <property type="entry name" value="CYTOCHROME B559 SUBUNIT BETA-RELATED"/>
    <property type="match status" value="1"/>
</dbReference>
<dbReference type="Pfam" id="PF00283">
    <property type="entry name" value="Cytochrom_B559"/>
    <property type="match status" value="1"/>
</dbReference>
<dbReference type="Pfam" id="PF00284">
    <property type="entry name" value="Cytochrom_B559a"/>
    <property type="match status" value="1"/>
</dbReference>
<dbReference type="PIRSF" id="PIRSF000036">
    <property type="entry name" value="PsbE"/>
    <property type="match status" value="1"/>
</dbReference>
<dbReference type="SUPFAM" id="SSF161045">
    <property type="entry name" value="Cytochrome b559 subunits"/>
    <property type="match status" value="1"/>
</dbReference>
<dbReference type="PROSITE" id="PS00537">
    <property type="entry name" value="CYTOCHROME_B559"/>
    <property type="match status" value="1"/>
</dbReference>